<organism>
    <name type="scientific">Agrobacterium fabrum (strain C58 / ATCC 33970)</name>
    <name type="common">Agrobacterium tumefaciens (strain C58)</name>
    <dbReference type="NCBI Taxonomy" id="176299"/>
    <lineage>
        <taxon>Bacteria</taxon>
        <taxon>Pseudomonadati</taxon>
        <taxon>Pseudomonadota</taxon>
        <taxon>Alphaproteobacteria</taxon>
        <taxon>Hyphomicrobiales</taxon>
        <taxon>Rhizobiaceae</taxon>
        <taxon>Rhizobium/Agrobacterium group</taxon>
        <taxon>Agrobacterium</taxon>
        <taxon>Agrobacterium tumefaciens complex</taxon>
    </lineage>
</organism>
<reference key="1">
    <citation type="journal article" date="2001" name="Science">
        <title>The genome of the natural genetic engineer Agrobacterium tumefaciens C58.</title>
        <authorList>
            <person name="Wood D.W."/>
            <person name="Setubal J.C."/>
            <person name="Kaul R."/>
            <person name="Monks D.E."/>
            <person name="Kitajima J.P."/>
            <person name="Okura V.K."/>
            <person name="Zhou Y."/>
            <person name="Chen L."/>
            <person name="Wood G.E."/>
            <person name="Almeida N.F. Jr."/>
            <person name="Woo L."/>
            <person name="Chen Y."/>
            <person name="Paulsen I.T."/>
            <person name="Eisen J.A."/>
            <person name="Karp P.D."/>
            <person name="Bovee D. Sr."/>
            <person name="Chapman P."/>
            <person name="Clendenning J."/>
            <person name="Deatherage G."/>
            <person name="Gillet W."/>
            <person name="Grant C."/>
            <person name="Kutyavin T."/>
            <person name="Levy R."/>
            <person name="Li M.-J."/>
            <person name="McClelland E."/>
            <person name="Palmieri A."/>
            <person name="Raymond C."/>
            <person name="Rouse G."/>
            <person name="Saenphimmachak C."/>
            <person name="Wu Z."/>
            <person name="Romero P."/>
            <person name="Gordon D."/>
            <person name="Zhang S."/>
            <person name="Yoo H."/>
            <person name="Tao Y."/>
            <person name="Biddle P."/>
            <person name="Jung M."/>
            <person name="Krespan W."/>
            <person name="Perry M."/>
            <person name="Gordon-Kamm B."/>
            <person name="Liao L."/>
            <person name="Kim S."/>
            <person name="Hendrick C."/>
            <person name="Zhao Z.-Y."/>
            <person name="Dolan M."/>
            <person name="Chumley F."/>
            <person name="Tingey S.V."/>
            <person name="Tomb J.-F."/>
            <person name="Gordon M.P."/>
            <person name="Olson M.V."/>
            <person name="Nester E.W."/>
        </authorList>
    </citation>
    <scope>NUCLEOTIDE SEQUENCE [LARGE SCALE GENOMIC DNA]</scope>
    <source>
        <strain>C58 / ATCC 33970</strain>
    </source>
</reference>
<reference key="2">
    <citation type="journal article" date="2001" name="Science">
        <title>Genome sequence of the plant pathogen and biotechnology agent Agrobacterium tumefaciens C58.</title>
        <authorList>
            <person name="Goodner B."/>
            <person name="Hinkle G."/>
            <person name="Gattung S."/>
            <person name="Miller N."/>
            <person name="Blanchard M."/>
            <person name="Qurollo B."/>
            <person name="Goldman B.S."/>
            <person name="Cao Y."/>
            <person name="Askenazi M."/>
            <person name="Halling C."/>
            <person name="Mullin L."/>
            <person name="Houmiel K."/>
            <person name="Gordon J."/>
            <person name="Vaudin M."/>
            <person name="Iartchouk O."/>
            <person name="Epp A."/>
            <person name="Liu F."/>
            <person name="Wollam C."/>
            <person name="Allinger M."/>
            <person name="Doughty D."/>
            <person name="Scott C."/>
            <person name="Lappas C."/>
            <person name="Markelz B."/>
            <person name="Flanagan C."/>
            <person name="Crowell C."/>
            <person name="Gurson J."/>
            <person name="Lomo C."/>
            <person name="Sear C."/>
            <person name="Strub G."/>
            <person name="Cielo C."/>
            <person name="Slater S."/>
        </authorList>
    </citation>
    <scope>NUCLEOTIDE SEQUENCE [LARGE SCALE GENOMIC DNA]</scope>
    <source>
        <strain>C58 / ATCC 33970</strain>
    </source>
</reference>
<gene>
    <name evidence="1" type="primary">clpP1</name>
    <name type="ordered locus">Atu1627</name>
    <name type="ORF">AGR_C_3003</name>
</gene>
<evidence type="ECO:0000255" key="1">
    <source>
        <dbReference type="HAMAP-Rule" id="MF_00444"/>
    </source>
</evidence>
<sequence>MRETMQLVPMVVEQSSRGERSFDIYSRLLRERIIFLNGEVDDTVSALVCAQLLFLEAENPKKPIHLYINSPGGMVTSGFAMYDTMRYIRAPVHTLCMGTARSMGSFLLMAGEPGTRAALPNASILIHQPSGGFQGQASDMLIHAEEIRQTKHRMTRLYAEHCGRSYEEFETAMDRDRFMTVQEALEWGLIDRILEVREDAAA</sequence>
<keyword id="KW-0963">Cytoplasm</keyword>
<keyword id="KW-0378">Hydrolase</keyword>
<keyword id="KW-0645">Protease</keyword>
<keyword id="KW-1185">Reference proteome</keyword>
<keyword id="KW-0720">Serine protease</keyword>
<accession>Q8UEX6</accession>
<protein>
    <recommendedName>
        <fullName evidence="1">ATP-dependent Clp protease proteolytic subunit 1</fullName>
        <ecNumber evidence="1">3.4.21.92</ecNumber>
    </recommendedName>
    <alternativeName>
        <fullName evidence="1">Endopeptidase Clp 1</fullName>
    </alternativeName>
</protein>
<feature type="chain" id="PRO_0000179474" description="ATP-dependent Clp protease proteolytic subunit 1">
    <location>
        <begin position="1"/>
        <end position="202"/>
    </location>
</feature>
<feature type="active site" description="Nucleophile" evidence="1">
    <location>
        <position position="102"/>
    </location>
</feature>
<feature type="active site" evidence="1">
    <location>
        <position position="127"/>
    </location>
</feature>
<comment type="function">
    <text evidence="1">Cleaves peptides in various proteins in a process that requires ATP hydrolysis. Has a chymotrypsin-like activity. Plays a major role in the degradation of misfolded proteins.</text>
</comment>
<comment type="catalytic activity">
    <reaction evidence="1">
        <text>Hydrolysis of proteins to small peptides in the presence of ATP and magnesium. alpha-casein is the usual test substrate. In the absence of ATP, only oligopeptides shorter than five residues are hydrolyzed (such as succinyl-Leu-Tyr-|-NHMec, and Leu-Tyr-Leu-|-Tyr-Trp, in which cleavage of the -Tyr-|-Leu- and -Tyr-|-Trp bonds also occurs).</text>
        <dbReference type="EC" id="3.4.21.92"/>
    </reaction>
</comment>
<comment type="subunit">
    <text evidence="1">Fourteen ClpP subunits assemble into 2 heptameric rings which stack back to back to give a disk-like structure with a central cavity, resembling the structure of eukaryotic proteasomes.</text>
</comment>
<comment type="subcellular location">
    <subcellularLocation>
        <location evidence="1">Cytoplasm</location>
    </subcellularLocation>
</comment>
<comment type="similarity">
    <text evidence="1">Belongs to the peptidase S14 family.</text>
</comment>
<proteinExistence type="inferred from homology"/>
<name>CLPP1_AGRFC</name>
<dbReference type="EC" id="3.4.21.92" evidence="1"/>
<dbReference type="EMBL" id="AE007869">
    <property type="protein sequence ID" value="AAK87406.1"/>
    <property type="molecule type" value="Genomic_DNA"/>
</dbReference>
<dbReference type="PIR" id="AG2776">
    <property type="entry name" value="AG2776"/>
</dbReference>
<dbReference type="PIR" id="E97556">
    <property type="entry name" value="E97556"/>
</dbReference>
<dbReference type="RefSeq" id="NP_354621.1">
    <property type="nucleotide sequence ID" value="NC_003062.2"/>
</dbReference>
<dbReference type="RefSeq" id="WP_010971753.1">
    <property type="nucleotide sequence ID" value="NC_003062.2"/>
</dbReference>
<dbReference type="SMR" id="Q8UEX6"/>
<dbReference type="STRING" id="176299.Atu1627"/>
<dbReference type="MEROPS" id="S14.001"/>
<dbReference type="EnsemblBacteria" id="AAK87406">
    <property type="protein sequence ID" value="AAK87406"/>
    <property type="gene ID" value="Atu1627"/>
</dbReference>
<dbReference type="GeneID" id="1133665"/>
<dbReference type="KEGG" id="atu:Atu1627"/>
<dbReference type="PATRIC" id="fig|176299.10.peg.1648"/>
<dbReference type="eggNOG" id="COG0740">
    <property type="taxonomic scope" value="Bacteria"/>
</dbReference>
<dbReference type="HOGENOM" id="CLU_058707_3_1_5"/>
<dbReference type="OrthoDB" id="9802800at2"/>
<dbReference type="PhylomeDB" id="Q8UEX6"/>
<dbReference type="BioCyc" id="AGRO:ATU1627-MONOMER"/>
<dbReference type="Proteomes" id="UP000000813">
    <property type="component" value="Chromosome circular"/>
</dbReference>
<dbReference type="GO" id="GO:0005737">
    <property type="term" value="C:cytoplasm"/>
    <property type="evidence" value="ECO:0007669"/>
    <property type="project" value="UniProtKB-SubCell"/>
</dbReference>
<dbReference type="GO" id="GO:0009368">
    <property type="term" value="C:endopeptidase Clp complex"/>
    <property type="evidence" value="ECO:0007669"/>
    <property type="project" value="TreeGrafter"/>
</dbReference>
<dbReference type="GO" id="GO:0004176">
    <property type="term" value="F:ATP-dependent peptidase activity"/>
    <property type="evidence" value="ECO:0007669"/>
    <property type="project" value="InterPro"/>
</dbReference>
<dbReference type="GO" id="GO:0051117">
    <property type="term" value="F:ATPase binding"/>
    <property type="evidence" value="ECO:0007669"/>
    <property type="project" value="TreeGrafter"/>
</dbReference>
<dbReference type="GO" id="GO:0004252">
    <property type="term" value="F:serine-type endopeptidase activity"/>
    <property type="evidence" value="ECO:0007669"/>
    <property type="project" value="UniProtKB-UniRule"/>
</dbReference>
<dbReference type="GO" id="GO:0006515">
    <property type="term" value="P:protein quality control for misfolded or incompletely synthesized proteins"/>
    <property type="evidence" value="ECO:0007669"/>
    <property type="project" value="TreeGrafter"/>
</dbReference>
<dbReference type="CDD" id="cd07017">
    <property type="entry name" value="S14_ClpP_2"/>
    <property type="match status" value="1"/>
</dbReference>
<dbReference type="FunFam" id="3.90.226.10:FF:000001">
    <property type="entry name" value="ATP-dependent Clp protease proteolytic subunit"/>
    <property type="match status" value="1"/>
</dbReference>
<dbReference type="Gene3D" id="3.90.226.10">
    <property type="entry name" value="2-enoyl-CoA Hydratase, Chain A, domain 1"/>
    <property type="match status" value="1"/>
</dbReference>
<dbReference type="HAMAP" id="MF_00444">
    <property type="entry name" value="ClpP"/>
    <property type="match status" value="1"/>
</dbReference>
<dbReference type="InterPro" id="IPR001907">
    <property type="entry name" value="ClpP"/>
</dbReference>
<dbReference type="InterPro" id="IPR029045">
    <property type="entry name" value="ClpP/crotonase-like_dom_sf"/>
</dbReference>
<dbReference type="InterPro" id="IPR023562">
    <property type="entry name" value="ClpP/TepA"/>
</dbReference>
<dbReference type="InterPro" id="IPR033135">
    <property type="entry name" value="ClpP_His_AS"/>
</dbReference>
<dbReference type="NCBIfam" id="NF001368">
    <property type="entry name" value="PRK00277.1"/>
    <property type="match status" value="1"/>
</dbReference>
<dbReference type="NCBIfam" id="NF009205">
    <property type="entry name" value="PRK12553.1"/>
    <property type="match status" value="1"/>
</dbReference>
<dbReference type="PANTHER" id="PTHR10381">
    <property type="entry name" value="ATP-DEPENDENT CLP PROTEASE PROTEOLYTIC SUBUNIT"/>
    <property type="match status" value="1"/>
</dbReference>
<dbReference type="PANTHER" id="PTHR10381:SF70">
    <property type="entry name" value="ATP-DEPENDENT CLP PROTEASE PROTEOLYTIC SUBUNIT"/>
    <property type="match status" value="1"/>
</dbReference>
<dbReference type="Pfam" id="PF00574">
    <property type="entry name" value="CLP_protease"/>
    <property type="match status" value="1"/>
</dbReference>
<dbReference type="PRINTS" id="PR00127">
    <property type="entry name" value="CLPPROTEASEP"/>
</dbReference>
<dbReference type="SUPFAM" id="SSF52096">
    <property type="entry name" value="ClpP/crotonase"/>
    <property type="match status" value="1"/>
</dbReference>
<dbReference type="PROSITE" id="PS00382">
    <property type="entry name" value="CLP_PROTEASE_HIS"/>
    <property type="match status" value="1"/>
</dbReference>